<protein>
    <recommendedName>
        <fullName evidence="8">Intrepicalcin</fullName>
    </recommendedName>
    <alternativeName>
        <fullName evidence="7 8">ViCaTx1</fullName>
    </alternativeName>
</protein>
<keyword id="KW-0108">Calcium channel impairing toxin</keyword>
<keyword id="KW-0165">Cleavage on pair of basic residues</keyword>
<keyword id="KW-1015">Disulfide bond</keyword>
<keyword id="KW-0872">Ion channel impairing toxin</keyword>
<keyword id="KW-0960">Knottin</keyword>
<keyword id="KW-0528">Neurotoxin</keyword>
<keyword id="KW-1219">Ryanodine-sensitive calcium-release channel impairing toxin</keyword>
<keyword id="KW-0964">Secreted</keyword>
<keyword id="KW-0732">Signal</keyword>
<keyword id="KW-0800">Toxin</keyword>
<sequence length="69" mass="7931">MRQNTMTIIFIVFIVTFASLTIYGAEASEANFLERRADCLAHLKLCKKNKDCCSKKCSRRGTNPEQRCR</sequence>
<feature type="signal peptide" evidence="5">
    <location>
        <begin position="1"/>
        <end position="27"/>
    </location>
</feature>
<feature type="propeptide" id="PRO_0000446292" evidence="9">
    <location>
        <begin position="28"/>
        <end position="36"/>
    </location>
</feature>
<feature type="chain" id="PRO_0000446293" description="Intrepicalcin">
    <location>
        <begin position="37"/>
        <end position="69"/>
    </location>
</feature>
<feature type="region of interest" description="Essential for stimulation of [3H]ryanodine binding to RYR1" evidence="3 4">
    <location>
        <begin position="59"/>
        <end position="60"/>
    </location>
</feature>
<feature type="site" description="Essential for stimulation of [3H]ryanodine binding to RYR1" evidence="3">
    <location>
        <position position="67"/>
    </location>
</feature>
<feature type="site" description="Essential for stimulation of [3H]ryanodine binding to RYR1" evidence="3">
    <location>
        <position position="69"/>
    </location>
</feature>
<feature type="disulfide bond" evidence="3">
    <location>
        <begin position="39"/>
        <end position="53"/>
    </location>
</feature>
<feature type="disulfide bond" evidence="3">
    <location>
        <begin position="46"/>
        <end position="57"/>
    </location>
</feature>
<feature type="disulfide bond" evidence="3">
    <location>
        <begin position="52"/>
        <end position="68"/>
    </location>
</feature>
<comment type="function">
    <text evidence="1 2 3 4 6">This toxin stabilizes ryanodine receptor 1 (RyR1) opening in a long-lasting subconductance state (55% of the full conductance state) (PubMed:28159581). Furthermore, it triggers calcium release from sarcoplasmic vesicles (45.3 nM are enough to induce a sharp release, and 50% of the total calcium is released after toxin (100 nM) addition) probably by acting as a cell-penetrating peptide (CPP) (PubMed:28159581). In addition, it has been shown to dose-dependently stimulate ryanodine binding to RyR1 (EC(50)=17.4 nM) (PubMed:28159581). It also augments the bell-shaped calcium-[3H]ryanodine binding curve that is maximal at about 10 uM calcium concentration (PubMed:28159581). It binds a different site as ryanodine (By similarity). It acts synergistically with caffeine (By similarity). In vivo, intracerebroventricular injection into mice induces neurotoxic symptoms, followed by death (By similarity).</text>
</comment>
<comment type="subcellular location">
    <subcellularLocation>
        <location evidence="10">Secreted</location>
    </subcellularLocation>
</comment>
<comment type="tissue specificity">
    <text evidence="11">Expressed by the venom gland.</text>
</comment>
<comment type="domain">
    <text evidence="3">The presence of a 'disulfide through disulfide knot' structurally defines this protein as a knottin.</text>
</comment>
<comment type="similarity">
    <text evidence="9">Belongs to the scorpion calcin family.</text>
</comment>
<accession>P0DM30</accession>
<organism>
    <name type="scientific">Thorellius intrepidus</name>
    <name type="common">Scorpion</name>
    <name type="synonym">Vaejovis intrepidus</name>
    <dbReference type="NCBI Taxonomy" id="1533001"/>
    <lineage>
        <taxon>Eukaryota</taxon>
        <taxon>Metazoa</taxon>
        <taxon>Ecdysozoa</taxon>
        <taxon>Arthropoda</taxon>
        <taxon>Chelicerata</taxon>
        <taxon>Arachnida</taxon>
        <taxon>Scorpiones</taxon>
        <taxon>Iurida</taxon>
        <taxon>Chactoidea</taxon>
        <taxon>Vaejovidae</taxon>
        <taxon>Thorellius</taxon>
    </lineage>
</organism>
<reference key="1">
    <citation type="journal article" date="2015" name="PLoS ONE">
        <title>Transcriptome analysis of scorpion species belonging to the Vaejovis genus.</title>
        <authorList>
            <person name="Quintero-Hernandez V."/>
            <person name="Ramirez-Carreto S."/>
            <person name="Romero-Gutierrez M.T."/>
            <person name="Valdez-Velazquez L.L."/>
            <person name="Becerril B."/>
            <person name="Possani L.D."/>
            <person name="Ortiz E."/>
        </authorList>
    </citation>
    <scope>NUCLEOTIDE SEQUENCE [MRNA]</scope>
    <source>
        <tissue>Venom gland</tissue>
    </source>
</reference>
<reference key="2">
    <citation type="journal article" date="2017" name="Biochim. Biophys. Acta">
        <title>Recombinant expression of intrepicalcin from the scorpion Vaejovis intrepidus and its effect on skeletal ryanodine receptors.</title>
        <authorList>
            <person name="Vargas-Jaimes L."/>
            <person name="Xiao L."/>
            <person name="Zhang J."/>
            <person name="Possani L.D."/>
            <person name="Valdivia H.H."/>
            <person name="Quintero-Hernandez V."/>
        </authorList>
    </citation>
    <scope>FUNCTION</scope>
    <scope>3D-STRUCTURE MODELING</scope>
</reference>
<dbReference type="EMBL" id="JZ818387">
    <property type="status" value="NOT_ANNOTATED_CDS"/>
    <property type="molecule type" value="mRNA"/>
</dbReference>
<dbReference type="SMR" id="P0DM30"/>
<dbReference type="GO" id="GO:0005576">
    <property type="term" value="C:extracellular region"/>
    <property type="evidence" value="ECO:0007669"/>
    <property type="project" value="UniProtKB-SubCell"/>
</dbReference>
<dbReference type="GO" id="GO:0019855">
    <property type="term" value="F:calcium channel inhibitor activity"/>
    <property type="evidence" value="ECO:0007669"/>
    <property type="project" value="InterPro"/>
</dbReference>
<dbReference type="GO" id="GO:0090729">
    <property type="term" value="F:toxin activity"/>
    <property type="evidence" value="ECO:0007669"/>
    <property type="project" value="UniProtKB-KW"/>
</dbReference>
<dbReference type="InterPro" id="IPR012632">
    <property type="entry name" value="Scorpion_calcine"/>
</dbReference>
<dbReference type="Pfam" id="PF08099">
    <property type="entry name" value="Toxin_27"/>
    <property type="match status" value="1"/>
</dbReference>
<dbReference type="SUPFAM" id="SSF57059">
    <property type="entry name" value="omega toxin-like"/>
    <property type="match status" value="1"/>
</dbReference>
<dbReference type="PROSITE" id="PS60028">
    <property type="entry name" value="SCORPION_CALCINE"/>
    <property type="match status" value="1"/>
</dbReference>
<name>CAINT_THOIN</name>
<proteinExistence type="inferred from homology"/>
<evidence type="ECO:0000250" key="1">
    <source>
        <dbReference type="UniProtKB" id="A0A1L4BJ42"/>
    </source>
</evidence>
<evidence type="ECO:0000250" key="2">
    <source>
        <dbReference type="UniProtKB" id="B8QG00"/>
    </source>
</evidence>
<evidence type="ECO:0000250" key="3">
    <source>
        <dbReference type="UniProtKB" id="P59868"/>
    </source>
</evidence>
<evidence type="ECO:0000250" key="4">
    <source>
        <dbReference type="UniProtKB" id="P60254"/>
    </source>
</evidence>
<evidence type="ECO:0000255" key="5"/>
<evidence type="ECO:0000269" key="6">
    <source>
    </source>
</evidence>
<evidence type="ECO:0000303" key="7">
    <source>
    </source>
</evidence>
<evidence type="ECO:0000303" key="8">
    <source>
    </source>
</evidence>
<evidence type="ECO:0000305" key="9"/>
<evidence type="ECO:0000305" key="10">
    <source>
    </source>
</evidence>
<evidence type="ECO:0000305" key="11">
    <source>
    </source>
</evidence>